<protein>
    <recommendedName>
        <fullName evidence="1">Large ribosomal subunit protein uL29</fullName>
    </recommendedName>
    <alternativeName>
        <fullName evidence="2">50S ribosomal protein L29</fullName>
    </alternativeName>
</protein>
<dbReference type="EMBL" id="CP001087">
    <property type="protein sequence ID" value="ACN16683.1"/>
    <property type="molecule type" value="Genomic_DNA"/>
</dbReference>
<dbReference type="RefSeq" id="WP_015905433.1">
    <property type="nucleotide sequence ID" value="NC_012108.1"/>
</dbReference>
<dbReference type="SMR" id="C0Q9W5"/>
<dbReference type="STRING" id="177437.HRM2_36180"/>
<dbReference type="KEGG" id="dat:HRM2_36180"/>
<dbReference type="eggNOG" id="COG0255">
    <property type="taxonomic scope" value="Bacteria"/>
</dbReference>
<dbReference type="HOGENOM" id="CLU_158491_5_2_7"/>
<dbReference type="OrthoDB" id="9815192at2"/>
<dbReference type="Proteomes" id="UP000000442">
    <property type="component" value="Chromosome"/>
</dbReference>
<dbReference type="GO" id="GO:0022625">
    <property type="term" value="C:cytosolic large ribosomal subunit"/>
    <property type="evidence" value="ECO:0007669"/>
    <property type="project" value="TreeGrafter"/>
</dbReference>
<dbReference type="GO" id="GO:0003735">
    <property type="term" value="F:structural constituent of ribosome"/>
    <property type="evidence" value="ECO:0007669"/>
    <property type="project" value="InterPro"/>
</dbReference>
<dbReference type="GO" id="GO:0006412">
    <property type="term" value="P:translation"/>
    <property type="evidence" value="ECO:0007669"/>
    <property type="project" value="UniProtKB-UniRule"/>
</dbReference>
<dbReference type="CDD" id="cd00427">
    <property type="entry name" value="Ribosomal_L29_HIP"/>
    <property type="match status" value="1"/>
</dbReference>
<dbReference type="FunFam" id="1.10.287.310:FF:000001">
    <property type="entry name" value="50S ribosomal protein L29"/>
    <property type="match status" value="1"/>
</dbReference>
<dbReference type="Gene3D" id="1.10.287.310">
    <property type="match status" value="1"/>
</dbReference>
<dbReference type="HAMAP" id="MF_00374">
    <property type="entry name" value="Ribosomal_uL29"/>
    <property type="match status" value="1"/>
</dbReference>
<dbReference type="InterPro" id="IPR050063">
    <property type="entry name" value="Ribosomal_protein_uL29"/>
</dbReference>
<dbReference type="InterPro" id="IPR001854">
    <property type="entry name" value="Ribosomal_uL29"/>
</dbReference>
<dbReference type="InterPro" id="IPR036049">
    <property type="entry name" value="Ribosomal_uL29_sf"/>
</dbReference>
<dbReference type="NCBIfam" id="TIGR00012">
    <property type="entry name" value="L29"/>
    <property type="match status" value="1"/>
</dbReference>
<dbReference type="PANTHER" id="PTHR10916">
    <property type="entry name" value="60S RIBOSOMAL PROTEIN L35/50S RIBOSOMAL PROTEIN L29"/>
    <property type="match status" value="1"/>
</dbReference>
<dbReference type="PANTHER" id="PTHR10916:SF0">
    <property type="entry name" value="LARGE RIBOSOMAL SUBUNIT PROTEIN UL29C"/>
    <property type="match status" value="1"/>
</dbReference>
<dbReference type="Pfam" id="PF00831">
    <property type="entry name" value="Ribosomal_L29"/>
    <property type="match status" value="1"/>
</dbReference>
<dbReference type="SUPFAM" id="SSF46561">
    <property type="entry name" value="Ribosomal protein L29 (L29p)"/>
    <property type="match status" value="1"/>
</dbReference>
<name>RL29_DESAH</name>
<comment type="similarity">
    <text evidence="1">Belongs to the universal ribosomal protein uL29 family.</text>
</comment>
<gene>
    <name evidence="1" type="primary">rpmC</name>
    <name type="ordered locus">HRM2_36180</name>
</gene>
<organism>
    <name type="scientific">Desulforapulum autotrophicum (strain ATCC 43914 / DSM 3382 / VKM B-1955 / HRM2)</name>
    <name type="common">Desulfobacterium autotrophicum</name>
    <dbReference type="NCBI Taxonomy" id="177437"/>
    <lineage>
        <taxon>Bacteria</taxon>
        <taxon>Pseudomonadati</taxon>
        <taxon>Thermodesulfobacteriota</taxon>
        <taxon>Desulfobacteria</taxon>
        <taxon>Desulfobacterales</taxon>
        <taxon>Desulfobacteraceae</taxon>
        <taxon>Desulforapulum</taxon>
    </lineage>
</organism>
<reference key="1">
    <citation type="journal article" date="2009" name="Environ. Microbiol.">
        <title>Genome sequence of Desulfobacterium autotrophicum HRM2, a marine sulfate reducer oxidizing organic carbon completely to carbon dioxide.</title>
        <authorList>
            <person name="Strittmatter A.W."/>
            <person name="Liesegang H."/>
            <person name="Rabus R."/>
            <person name="Decker I."/>
            <person name="Amann J."/>
            <person name="Andres S."/>
            <person name="Henne A."/>
            <person name="Fricke W.F."/>
            <person name="Martinez-Arias R."/>
            <person name="Bartels D."/>
            <person name="Goesmann A."/>
            <person name="Krause L."/>
            <person name="Puehler A."/>
            <person name="Klenk H.P."/>
            <person name="Richter M."/>
            <person name="Schuler M."/>
            <person name="Gloeckner F.O."/>
            <person name="Meyerdierks A."/>
            <person name="Gottschalk G."/>
            <person name="Amann R."/>
        </authorList>
    </citation>
    <scope>NUCLEOTIDE SEQUENCE [LARGE SCALE GENOMIC DNA]</scope>
    <source>
        <strain>ATCC 43914 / DSM 3382 / VKM B-1955 / HRM2</strain>
    </source>
</reference>
<proteinExistence type="inferred from homology"/>
<accession>C0Q9W5</accession>
<sequence length="65" mass="7523">MKISEIREMSAQEITGKLTELKKEFFNLRFQHGVGQLENTAILPSIRKDIARLMTVCREMNLNIS</sequence>
<keyword id="KW-1185">Reference proteome</keyword>
<keyword id="KW-0687">Ribonucleoprotein</keyword>
<keyword id="KW-0689">Ribosomal protein</keyword>
<feature type="chain" id="PRO_1000205620" description="Large ribosomal subunit protein uL29">
    <location>
        <begin position="1"/>
        <end position="65"/>
    </location>
</feature>
<evidence type="ECO:0000255" key="1">
    <source>
        <dbReference type="HAMAP-Rule" id="MF_00374"/>
    </source>
</evidence>
<evidence type="ECO:0000305" key="2"/>